<keyword id="KW-0007">Acetylation</keyword>
<keyword id="KW-1003">Cell membrane</keyword>
<keyword id="KW-0963">Cytoplasm</keyword>
<keyword id="KW-0903">Direct protein sequencing</keyword>
<keyword id="KW-0324">Glycolysis</keyword>
<keyword id="KW-0379">Hydroxylation</keyword>
<keyword id="KW-1017">Isopeptide bond</keyword>
<keyword id="KW-0456">Lyase</keyword>
<keyword id="KW-0460">Magnesium</keyword>
<keyword id="KW-0472">Membrane</keyword>
<keyword id="KW-0479">Metal-binding</keyword>
<keyword id="KW-0597">Phosphoprotein</keyword>
<keyword id="KW-0617">Plasminogen activation</keyword>
<keyword id="KW-1185">Reference proteome</keyword>
<keyword id="KW-0832">Ubl conjugation</keyword>
<accession>Q9XSJ4</accession>
<accession>Q3SYW4</accession>
<protein>
    <recommendedName>
        <fullName>Alpha-enolase</fullName>
        <ecNumber>4.2.1.11</ecNumber>
    </recommendedName>
    <alternativeName>
        <fullName>2-phospho-D-glycerate hydro-lyase</fullName>
    </alternativeName>
    <alternativeName>
        <fullName>Enolase 1</fullName>
    </alternativeName>
    <alternativeName>
        <fullName>HAP47</fullName>
    </alternativeName>
    <alternativeName>
        <fullName>Non-neural enolase</fullName>
        <shortName>NNE</shortName>
    </alternativeName>
    <alternativeName>
        <fullName>Phosphopyruvate hydratase</fullName>
    </alternativeName>
</protein>
<comment type="function">
    <text evidence="3 5">Glycolytic enzyme the catalyzes the conversion of 2-phosphoglycerate to phosphoenolpyruvate (By similarity). In addition to glycolysis, involved in various processes such as growth control, hypoxia tolerance and allergic responses (PubMed:7499243). May also function in the intravascular and pericellular fibrinolytic system due to its ability to serve as a receptor and activator of plasminogen on the cell surface of several cell-types such as leukocytes and neurons (By similarity). Stimulates immunoglobulin production (By similarity).</text>
</comment>
<comment type="catalytic activity">
    <reaction evidence="3">
        <text>(2R)-2-phosphoglycerate = phosphoenolpyruvate + H2O</text>
        <dbReference type="Rhea" id="RHEA:10164"/>
        <dbReference type="ChEBI" id="CHEBI:15377"/>
        <dbReference type="ChEBI" id="CHEBI:58289"/>
        <dbReference type="ChEBI" id="CHEBI:58702"/>
        <dbReference type="EC" id="4.2.1.11"/>
    </reaction>
</comment>
<comment type="cofactor">
    <cofactor evidence="3">
        <name>Mg(2+)</name>
        <dbReference type="ChEBI" id="CHEBI:18420"/>
    </cofactor>
    <text evidence="3">Binds two Mg(2+) per subunit. Required for catalysis and for stabilizing the dimer.</text>
</comment>
<comment type="pathway">
    <text>Carbohydrate degradation; glycolysis; pyruvate from D-glyceraldehyde 3-phosphate: step 4/5.</text>
</comment>
<comment type="subunit">
    <text evidence="3 4">Mammalian enolase is composed of 3 isozyme subunits, alpha, beta and gamma, which can form homodimers or heterodimers which are cell-type and development-specific. ENO1 interacts with PLG in the neuronal plasma membrane and promotes its activation. The C-terminal lysine is required for this binding. Interacts with ENO4 and PGAM2 (By similarity). Interacts with CMTM6 (By similarity).</text>
</comment>
<comment type="subcellular location">
    <subcellularLocation>
        <location evidence="1">Cytoplasm</location>
    </subcellularLocation>
    <subcellularLocation>
        <location evidence="1">Cell membrane</location>
    </subcellularLocation>
    <text evidence="1">Can translocate to the plasma membrane in either the homodimeric (alpha/alpha) or heterodimeric (alpha/gamma) form. ENO1 is localized to the M-band.</text>
</comment>
<comment type="tissue specificity">
    <text>The alpha/alpha homodimer is expressed in embryo and in most adult tissues. The alpha/beta heterodimer and the beta/beta homodimer are found in striated muscle, and the alpha/gamma heterodimer and the gamma/gamma homodimer in neurons.</text>
</comment>
<comment type="developmental stage">
    <text>During ontogenesis, there is a transition from the alpha/alpha homodimer to the alpha/beta heterodimer in striated muscle cells, and to the alpha/gamma heterodimer in nerve cells.</text>
</comment>
<comment type="induction">
    <text>Expression increased up to 3-fold by hypoxic stress in vascular endothelial cells.</text>
</comment>
<comment type="PTM">
    <text evidence="3">ISGylated.</text>
</comment>
<comment type="PTM">
    <text evidence="3">Lysine 2-hydroxyisobutyrylation (Khib) by p300/EP300 activates the phosphopyruvate hydratase activity.</text>
</comment>
<comment type="similarity">
    <text evidence="6">Belongs to the enolase family.</text>
</comment>
<proteinExistence type="evidence at protein level"/>
<name>ENOA_BOVIN</name>
<dbReference type="EC" id="4.2.1.11"/>
<dbReference type="EMBL" id="AF149256">
    <property type="protein sequence ID" value="AAD33073.1"/>
    <property type="molecule type" value="mRNA"/>
</dbReference>
<dbReference type="EMBL" id="BC103354">
    <property type="protein sequence ID" value="AAI03355.1"/>
    <property type="molecule type" value="mRNA"/>
</dbReference>
<dbReference type="RefSeq" id="NP_776474.2">
    <property type="nucleotide sequence ID" value="NM_174049.2"/>
</dbReference>
<dbReference type="SMR" id="Q9XSJ4"/>
<dbReference type="FunCoup" id="Q9XSJ4">
    <property type="interactions" value="1807"/>
</dbReference>
<dbReference type="STRING" id="9913.ENSBTAP00000017839"/>
<dbReference type="Allergome" id="11909">
    <property type="allergen name" value="Bos d Enolase"/>
</dbReference>
<dbReference type="PaxDb" id="9913-ENSBTAP00000017839"/>
<dbReference type="PeptideAtlas" id="Q9XSJ4"/>
<dbReference type="GeneID" id="281141"/>
<dbReference type="KEGG" id="bta:281141"/>
<dbReference type="CTD" id="2023"/>
<dbReference type="eggNOG" id="KOG2670">
    <property type="taxonomic scope" value="Eukaryota"/>
</dbReference>
<dbReference type="InParanoid" id="Q9XSJ4"/>
<dbReference type="OrthoDB" id="1739814at2759"/>
<dbReference type="SABIO-RK" id="Q9XSJ4"/>
<dbReference type="UniPathway" id="UPA00109">
    <property type="reaction ID" value="UER00187"/>
</dbReference>
<dbReference type="Proteomes" id="UP000009136">
    <property type="component" value="Unplaced"/>
</dbReference>
<dbReference type="GO" id="GO:0005737">
    <property type="term" value="C:cytoplasm"/>
    <property type="evidence" value="ECO:0000250"/>
    <property type="project" value="AgBase"/>
</dbReference>
<dbReference type="GO" id="GO:0000015">
    <property type="term" value="C:phosphopyruvate hydratase complex"/>
    <property type="evidence" value="ECO:0000318"/>
    <property type="project" value="GO_Central"/>
</dbReference>
<dbReference type="GO" id="GO:0005886">
    <property type="term" value="C:plasma membrane"/>
    <property type="evidence" value="ECO:0007669"/>
    <property type="project" value="UniProtKB-SubCell"/>
</dbReference>
<dbReference type="GO" id="GO:0000287">
    <property type="term" value="F:magnesium ion binding"/>
    <property type="evidence" value="ECO:0007669"/>
    <property type="project" value="InterPro"/>
</dbReference>
<dbReference type="GO" id="GO:0004634">
    <property type="term" value="F:phosphopyruvate hydratase activity"/>
    <property type="evidence" value="ECO:0000250"/>
    <property type="project" value="UniProtKB"/>
</dbReference>
<dbReference type="GO" id="GO:0061621">
    <property type="term" value="P:canonical glycolysis"/>
    <property type="evidence" value="ECO:0000250"/>
    <property type="project" value="UniProtKB"/>
</dbReference>
<dbReference type="GO" id="GO:0006096">
    <property type="term" value="P:glycolytic process"/>
    <property type="evidence" value="ECO:0000318"/>
    <property type="project" value="GO_Central"/>
</dbReference>
<dbReference type="CDD" id="cd03313">
    <property type="entry name" value="enolase"/>
    <property type="match status" value="1"/>
</dbReference>
<dbReference type="FunFam" id="3.30.390.10:FF:000001">
    <property type="entry name" value="Enolase"/>
    <property type="match status" value="1"/>
</dbReference>
<dbReference type="FunFam" id="3.20.20.120:FF:000002">
    <property type="entry name" value="Enolase 1"/>
    <property type="match status" value="1"/>
</dbReference>
<dbReference type="Gene3D" id="3.20.20.120">
    <property type="entry name" value="Enolase-like C-terminal domain"/>
    <property type="match status" value="1"/>
</dbReference>
<dbReference type="Gene3D" id="3.30.390.10">
    <property type="entry name" value="Enolase-like, N-terminal domain"/>
    <property type="match status" value="1"/>
</dbReference>
<dbReference type="HAMAP" id="MF_00318">
    <property type="entry name" value="Enolase"/>
    <property type="match status" value="1"/>
</dbReference>
<dbReference type="InterPro" id="IPR000941">
    <property type="entry name" value="Enolase"/>
</dbReference>
<dbReference type="InterPro" id="IPR036849">
    <property type="entry name" value="Enolase-like_C_sf"/>
</dbReference>
<dbReference type="InterPro" id="IPR029017">
    <property type="entry name" value="Enolase-like_N"/>
</dbReference>
<dbReference type="InterPro" id="IPR020810">
    <property type="entry name" value="Enolase_C"/>
</dbReference>
<dbReference type="InterPro" id="IPR020809">
    <property type="entry name" value="Enolase_CS"/>
</dbReference>
<dbReference type="InterPro" id="IPR020811">
    <property type="entry name" value="Enolase_N"/>
</dbReference>
<dbReference type="NCBIfam" id="TIGR01060">
    <property type="entry name" value="eno"/>
    <property type="match status" value="1"/>
</dbReference>
<dbReference type="PANTHER" id="PTHR11902:SF55">
    <property type="entry name" value="ALPHA-ENOLASE"/>
    <property type="match status" value="1"/>
</dbReference>
<dbReference type="PANTHER" id="PTHR11902">
    <property type="entry name" value="ENOLASE"/>
    <property type="match status" value="1"/>
</dbReference>
<dbReference type="Pfam" id="PF00113">
    <property type="entry name" value="Enolase_C"/>
    <property type="match status" value="1"/>
</dbReference>
<dbReference type="Pfam" id="PF03952">
    <property type="entry name" value="Enolase_N"/>
    <property type="match status" value="1"/>
</dbReference>
<dbReference type="PIRSF" id="PIRSF001400">
    <property type="entry name" value="Enolase"/>
    <property type="match status" value="1"/>
</dbReference>
<dbReference type="PRINTS" id="PR00148">
    <property type="entry name" value="ENOLASE"/>
</dbReference>
<dbReference type="SFLD" id="SFLDS00001">
    <property type="entry name" value="Enolase"/>
    <property type="match status" value="1"/>
</dbReference>
<dbReference type="SFLD" id="SFLDF00002">
    <property type="entry name" value="enolase"/>
    <property type="match status" value="1"/>
</dbReference>
<dbReference type="SMART" id="SM01192">
    <property type="entry name" value="Enolase_C"/>
    <property type="match status" value="1"/>
</dbReference>
<dbReference type="SMART" id="SM01193">
    <property type="entry name" value="Enolase_N"/>
    <property type="match status" value="1"/>
</dbReference>
<dbReference type="SUPFAM" id="SSF51604">
    <property type="entry name" value="Enolase C-terminal domain-like"/>
    <property type="match status" value="1"/>
</dbReference>
<dbReference type="SUPFAM" id="SSF54826">
    <property type="entry name" value="Enolase N-terminal domain-like"/>
    <property type="match status" value="1"/>
</dbReference>
<dbReference type="PROSITE" id="PS00164">
    <property type="entry name" value="ENOLASE"/>
    <property type="match status" value="1"/>
</dbReference>
<sequence length="434" mass="47326">MSILKVHAREIFDSRGNPTVEVDLFTAKGLFRAAVPSGASTGIYEALELRDNDKTRYMGKGVSKAVEHINKTIAPALVSKKLNVVEQEKIDKLMIEMDGTENKSKFGANAILGVSLAVCKAGAVEKGVPLYRHIADLAGNAEVILPVPAFNVINGGSHAGNKLAMQEFMILPVGAENFREAMRIGAEVYHNLKNVIKEKYGKDATNVGDEGGFAPNILENKEALELLKNAIGKAGYSDKVVIGMDVAASEFYRSGKYDLDFKSPDDPSRYITPDELANLYKSFIRDYPVVSIEDPFDQDDWEAWQKFTASAGIQVVGDDLTVTNPKRIAKAVSEKSCNCLLLKVNQIGSVTESLQACKLAQSNGWGVMVSHRSGETEDTFIADLVVGLCTGQIKTVAPCRSERLAKYNQILRIEEELGSKAKFAGRSFRNPLAK</sequence>
<organism>
    <name type="scientific">Bos taurus</name>
    <name type="common">Bovine</name>
    <dbReference type="NCBI Taxonomy" id="9913"/>
    <lineage>
        <taxon>Eukaryota</taxon>
        <taxon>Metazoa</taxon>
        <taxon>Chordata</taxon>
        <taxon>Craniata</taxon>
        <taxon>Vertebrata</taxon>
        <taxon>Euteleostomi</taxon>
        <taxon>Mammalia</taxon>
        <taxon>Eutheria</taxon>
        <taxon>Laurasiatheria</taxon>
        <taxon>Artiodactyla</taxon>
        <taxon>Ruminantia</taxon>
        <taxon>Pecora</taxon>
        <taxon>Bovidae</taxon>
        <taxon>Bovinae</taxon>
        <taxon>Bos</taxon>
    </lineage>
</organism>
<evidence type="ECO:0000250" key="1"/>
<evidence type="ECO:0000250" key="2">
    <source>
        <dbReference type="UniProtKB" id="P00924"/>
    </source>
</evidence>
<evidence type="ECO:0000250" key="3">
    <source>
        <dbReference type="UniProtKB" id="P06733"/>
    </source>
</evidence>
<evidence type="ECO:0000250" key="4">
    <source>
        <dbReference type="UniProtKB" id="P17182"/>
    </source>
</evidence>
<evidence type="ECO:0000269" key="5">
    <source>
    </source>
</evidence>
<evidence type="ECO:0000305" key="6"/>
<gene>
    <name type="primary">ENO1</name>
</gene>
<feature type="initiator methionine" description="Removed" evidence="3">
    <location>
        <position position="1"/>
    </location>
</feature>
<feature type="chain" id="PRO_0000134096" description="Alpha-enolase">
    <location>
        <begin position="2"/>
        <end position="434"/>
    </location>
</feature>
<feature type="region of interest" description="Required for interaction with PLG" evidence="1">
    <location>
        <begin position="405"/>
        <end position="434"/>
    </location>
</feature>
<feature type="active site" description="Proton donor" evidence="2">
    <location>
        <position position="210"/>
    </location>
</feature>
<feature type="active site" description="Proton acceptor" evidence="2">
    <location>
        <position position="343"/>
    </location>
</feature>
<feature type="binding site" evidence="3">
    <location>
        <position position="40"/>
    </location>
    <ligand>
        <name>Mg(2+)</name>
        <dbReference type="ChEBI" id="CHEBI:18420"/>
        <label>1</label>
    </ligand>
</feature>
<feature type="binding site" evidence="2">
    <location>
        <position position="158"/>
    </location>
    <ligand>
        <name>substrate</name>
    </ligand>
</feature>
<feature type="binding site" evidence="2">
    <location>
        <position position="167"/>
    </location>
    <ligand>
        <name>substrate</name>
    </ligand>
</feature>
<feature type="binding site" evidence="3">
    <location>
        <position position="245"/>
    </location>
    <ligand>
        <name>Mg(2+)</name>
        <dbReference type="ChEBI" id="CHEBI:18420"/>
        <label>2</label>
    </ligand>
</feature>
<feature type="binding site" evidence="3">
    <location>
        <position position="293"/>
    </location>
    <ligand>
        <name>Mg(2+)</name>
        <dbReference type="ChEBI" id="CHEBI:18420"/>
        <label>2</label>
    </ligand>
</feature>
<feature type="binding site" evidence="2">
    <location>
        <position position="293"/>
    </location>
    <ligand>
        <name>substrate</name>
    </ligand>
</feature>
<feature type="binding site" evidence="3">
    <location>
        <position position="318"/>
    </location>
    <ligand>
        <name>Mg(2+)</name>
        <dbReference type="ChEBI" id="CHEBI:18420"/>
        <label>2</label>
    </ligand>
</feature>
<feature type="binding site" evidence="2">
    <location>
        <position position="318"/>
    </location>
    <ligand>
        <name>substrate</name>
    </ligand>
</feature>
<feature type="binding site" evidence="2">
    <location>
        <begin position="370"/>
        <end position="373"/>
    </location>
    <ligand>
        <name>substrate</name>
    </ligand>
</feature>
<feature type="binding site" evidence="2">
    <location>
        <position position="394"/>
    </location>
    <ligand>
        <name>substrate</name>
    </ligand>
</feature>
<feature type="modified residue" description="N-acetylserine" evidence="3">
    <location>
        <position position="2"/>
    </location>
</feature>
<feature type="modified residue" description="N6-acetyllysine" evidence="3">
    <location>
        <position position="5"/>
    </location>
</feature>
<feature type="modified residue" description="Phosphotyrosine" evidence="3">
    <location>
        <position position="44"/>
    </location>
</feature>
<feature type="modified residue" description="N6-acetyllysine; alternate" evidence="4">
    <location>
        <position position="60"/>
    </location>
</feature>
<feature type="modified residue" description="N6-succinyllysine; alternate" evidence="4">
    <location>
        <position position="60"/>
    </location>
</feature>
<feature type="modified residue" description="N6-acetyllysine" evidence="3">
    <location>
        <position position="64"/>
    </location>
</feature>
<feature type="modified residue" description="N6-acetyllysine" evidence="3">
    <location>
        <position position="71"/>
    </location>
</feature>
<feature type="modified residue" description="N6-acetyllysine; alternate" evidence="3">
    <location>
        <position position="89"/>
    </location>
</feature>
<feature type="modified residue" description="N6-succinyllysine; alternate" evidence="4">
    <location>
        <position position="89"/>
    </location>
</feature>
<feature type="modified residue" description="N6-acetyllysine" evidence="4">
    <location>
        <position position="92"/>
    </location>
</feature>
<feature type="modified residue" description="N6-acetyllysine" evidence="3">
    <location>
        <position position="126"/>
    </location>
</feature>
<feature type="modified residue" description="N6-acetyllysine" evidence="3">
    <location>
        <position position="193"/>
    </location>
</feature>
<feature type="modified residue" description="N6-acetyllysine" evidence="3">
    <location>
        <position position="199"/>
    </location>
</feature>
<feature type="modified residue" description="N6-acetyllysine; alternate" evidence="4">
    <location>
        <position position="202"/>
    </location>
</feature>
<feature type="modified residue" description="N6-(2-hydroxyisobutyryl)lysine; alternate" evidence="3">
    <location>
        <position position="228"/>
    </location>
</feature>
<feature type="modified residue" description="N6-acetyllysine; alternate" evidence="3">
    <location>
        <position position="228"/>
    </location>
</feature>
<feature type="modified residue" description="N6-succinyllysine; alternate" evidence="4">
    <location>
        <position position="228"/>
    </location>
</feature>
<feature type="modified residue" description="N6-acetyllysine; alternate" evidence="3">
    <location>
        <position position="233"/>
    </location>
</feature>
<feature type="modified residue" description="N6-malonyllysine; alternate" evidence="1">
    <location>
        <position position="233"/>
    </location>
</feature>
<feature type="modified residue" description="Phosphoserine" evidence="3">
    <location>
        <position position="254"/>
    </location>
</feature>
<feature type="modified residue" description="N6-acetyllysine" evidence="3">
    <location>
        <position position="256"/>
    </location>
</feature>
<feature type="modified residue" description="Phosphoserine" evidence="3">
    <location>
        <position position="263"/>
    </location>
</feature>
<feature type="modified residue" description="N6-(2-hydroxyisobutyryl)lysine; alternate" evidence="3">
    <location>
        <position position="281"/>
    </location>
</feature>
<feature type="modified residue" description="N6-acetyllysine; alternate" evidence="3">
    <location>
        <position position="281"/>
    </location>
</feature>
<feature type="modified residue" description="Phosphotyrosine" evidence="3">
    <location>
        <position position="287"/>
    </location>
</feature>
<feature type="modified residue" description="Phosphoserine" evidence="3">
    <location>
        <position position="291"/>
    </location>
</feature>
<feature type="modified residue" description="N6-acetyllysine" evidence="4">
    <location>
        <position position="335"/>
    </location>
</feature>
<feature type="modified residue" description="N6-acetyllysine" evidence="4">
    <location>
        <position position="343"/>
    </location>
</feature>
<feature type="modified residue" description="N6-acetyllysine" evidence="4">
    <location>
        <position position="406"/>
    </location>
</feature>
<feature type="modified residue" description="N6-acetyllysine; alternate" evidence="3">
    <location>
        <position position="420"/>
    </location>
</feature>
<feature type="modified residue" description="N6-malonyllysine; alternate" evidence="1">
    <location>
        <position position="420"/>
    </location>
</feature>
<feature type="modified residue" description="N6-succinyllysine; alternate" evidence="4">
    <location>
        <position position="420"/>
    </location>
</feature>
<feature type="cross-link" description="Glycyl lysine isopeptide (Lys-Gly) (interchain with G-Cter in SUMO2); alternate" evidence="3">
    <location>
        <position position="202"/>
    </location>
</feature>
<feature type="sequence conflict" description="In Ref. 1; AAD33073." evidence="6" ref="1">
    <original>L</original>
    <variation>S</variation>
    <location>
        <position position="82"/>
    </location>
</feature>
<feature type="sequence conflict" description="In Ref. 1; AAD33073." evidence="6" ref="1">
    <original>N</original>
    <variation>K</variation>
    <location>
        <position position="102"/>
    </location>
</feature>
<feature type="sequence conflict" description="In Ref. 1; AAD33073." evidence="6" ref="1">
    <original>N</original>
    <variation>T</variation>
    <location>
        <position position="324"/>
    </location>
</feature>
<feature type="sequence conflict" description="In Ref. 1; AAD33073." evidence="6" ref="1">
    <original>R</original>
    <variation>T</variation>
    <location>
        <position position="327"/>
    </location>
</feature>
<feature type="sequence conflict" description="In Ref. 1; AAD33073." evidence="6" ref="1">
    <original>AVS</original>
    <variation>GVN</variation>
    <location>
        <begin position="331"/>
        <end position="333"/>
    </location>
</feature>
<feature type="sequence conflict" description="In Ref. 1; AAD33073." evidence="6" ref="1">
    <original>I</original>
    <variation>N</variation>
    <location>
        <position position="347"/>
    </location>
</feature>
<feature type="sequence conflict" description="In Ref. 1; AAD33073." evidence="6" ref="1">
    <original>A</original>
    <variation>G</variation>
    <location>
        <position position="356"/>
    </location>
</feature>
<feature type="sequence conflict" description="In Ref. 1; AAD33073." evidence="6" ref="1">
    <original>QS</original>
    <variation>HA</variation>
    <location>
        <begin position="361"/>
        <end position="362"/>
    </location>
</feature>
<feature type="sequence conflict" description="In Ref. 1; AAD33073." evidence="6" ref="1">
    <original>E</original>
    <variation>D</variation>
    <location>
        <position position="377"/>
    </location>
</feature>
<feature type="sequence conflict" description="In Ref. 1; AAD33073." evidence="6" ref="1">
    <original>D</original>
    <variation>E</variation>
    <location>
        <position position="383"/>
    </location>
</feature>
<feature type="sequence conflict" description="In Ref. 1; AAD33073." evidence="6" ref="1">
    <original>TVA</original>
    <variation>NGP</variation>
    <location>
        <begin position="395"/>
        <end position="397"/>
    </location>
</feature>
<feature type="sequence conflict" description="In Ref. 1; AAD33073." evidence="6" ref="1">
    <original>S</original>
    <variation>T</variation>
    <location>
        <position position="401"/>
    </location>
</feature>
<feature type="sequence conflict" description="In Ref. 1; AAD33073." evidence="6" ref="1">
    <original>S</original>
    <variation>N</variation>
    <location>
        <position position="427"/>
    </location>
</feature>
<reference key="1">
    <citation type="submission" date="1999-05" db="EMBL/GenBank/DDBJ databases">
        <title>Alpha enolase is upregulated in proliferative chondrocytes in the epiphyseal growth plate and in human osteoarthritic tissue.</title>
        <authorList>
            <person name="Chapman K.L."/>
            <person name="Newman B."/>
            <person name="Hillaby M.C."/>
            <person name="Freemont A.J."/>
            <person name="Grant M.E."/>
            <person name="Boot-Handford R."/>
            <person name="Wallis G.A."/>
        </authorList>
    </citation>
    <scope>NUCLEOTIDE SEQUENCE [MRNA]</scope>
</reference>
<reference key="2">
    <citation type="submission" date="2005-08" db="EMBL/GenBank/DDBJ databases">
        <authorList>
            <consortium name="NIH - Mammalian Gene Collection (MGC) project"/>
        </authorList>
    </citation>
    <scope>NUCLEOTIDE SEQUENCE [LARGE SCALE MRNA]</scope>
    <source>
        <strain>Crossbred X Angus</strain>
        <tissue>Ileum</tissue>
    </source>
</reference>
<reference key="3">
    <citation type="journal article" date="1995" name="J. Biol. Chem.">
        <title>Non-neuronal enolase is an endothelial hypoxic stress protein.</title>
        <authorList>
            <person name="Aaronson R.M."/>
            <person name="Graven K.K."/>
            <person name="Tucci M."/>
            <person name="McDonald R.J."/>
            <person name="Farber H.W."/>
        </authorList>
    </citation>
    <scope>PROTEIN SEQUENCE OF 270-281 AND 373-394</scope>
    <scope>FUNCTION AS AN ENDOTHELIAL HYPOXIC STRESS PROTEIN</scope>
</reference>